<dbReference type="EMBL" id="AB012104">
    <property type="protein sequence ID" value="BAA79201.1"/>
    <property type="molecule type" value="Genomic_DNA"/>
</dbReference>
<dbReference type="RefSeq" id="NP_008768.1">
    <property type="nucleotide sequence ID" value="NC_000886.1"/>
</dbReference>
<dbReference type="SMR" id="Q9XPI2"/>
<dbReference type="GeneID" id="808645"/>
<dbReference type="KEGG" id="cmy:808645"/>
<dbReference type="CTD" id="4509"/>
<dbReference type="OrthoDB" id="8734014at2759"/>
<dbReference type="GO" id="GO:0031966">
    <property type="term" value="C:mitochondrial membrane"/>
    <property type="evidence" value="ECO:0007669"/>
    <property type="project" value="UniProtKB-SubCell"/>
</dbReference>
<dbReference type="GO" id="GO:0045259">
    <property type="term" value="C:proton-transporting ATP synthase complex"/>
    <property type="evidence" value="ECO:0007669"/>
    <property type="project" value="UniProtKB-KW"/>
</dbReference>
<dbReference type="GO" id="GO:0015078">
    <property type="term" value="F:proton transmembrane transporter activity"/>
    <property type="evidence" value="ECO:0007669"/>
    <property type="project" value="InterPro"/>
</dbReference>
<dbReference type="GO" id="GO:0015986">
    <property type="term" value="P:proton motive force-driven ATP synthesis"/>
    <property type="evidence" value="ECO:0007669"/>
    <property type="project" value="InterPro"/>
</dbReference>
<dbReference type="InterPro" id="IPR001421">
    <property type="entry name" value="ATP8_metazoa"/>
</dbReference>
<dbReference type="InterPro" id="IPR050635">
    <property type="entry name" value="ATPase_protein_8"/>
</dbReference>
<dbReference type="PANTHER" id="PTHR39937">
    <property type="entry name" value="ATP SYNTHASE PROTEIN 8"/>
    <property type="match status" value="1"/>
</dbReference>
<dbReference type="PANTHER" id="PTHR39937:SF1">
    <property type="entry name" value="ATP SYNTHASE PROTEIN 8"/>
    <property type="match status" value="1"/>
</dbReference>
<dbReference type="Pfam" id="PF00895">
    <property type="entry name" value="ATP-synt_8"/>
    <property type="match status" value="1"/>
</dbReference>
<geneLocation type="mitochondrion"/>
<organism>
    <name type="scientific">Chelonia mydas</name>
    <name type="common">Green sea-turtle</name>
    <name type="synonym">Chelonia agassizi</name>
    <dbReference type="NCBI Taxonomy" id="8469"/>
    <lineage>
        <taxon>Eukaryota</taxon>
        <taxon>Metazoa</taxon>
        <taxon>Chordata</taxon>
        <taxon>Craniata</taxon>
        <taxon>Vertebrata</taxon>
        <taxon>Euteleostomi</taxon>
        <taxon>Archelosauria</taxon>
        <taxon>Testudinata</taxon>
        <taxon>Testudines</taxon>
        <taxon>Cryptodira</taxon>
        <taxon>Durocryptodira</taxon>
        <taxon>Americhelydia</taxon>
        <taxon>Chelonioidea</taxon>
        <taxon>Cheloniidae</taxon>
        <taxon>Chelonia</taxon>
    </lineage>
</organism>
<reference key="1">
    <citation type="journal article" date="1999" name="Mol. Biol. Evol.">
        <title>Complete mitochondrial DNA sequences of the green turtle and blue-tailed mole skink: statistical evidence for archosaurian affinity of turtles.</title>
        <authorList>
            <person name="Kumazawa Y."/>
            <person name="Nishida M."/>
        </authorList>
    </citation>
    <scope>NUCLEOTIDE SEQUENCE [GENOMIC DNA]</scope>
</reference>
<evidence type="ECO:0000250" key="1">
    <source>
        <dbReference type="UniProtKB" id="P03928"/>
    </source>
</evidence>
<evidence type="ECO:0000250" key="2">
    <source>
        <dbReference type="UniProtKB" id="P19483"/>
    </source>
</evidence>
<evidence type="ECO:0000255" key="3"/>
<evidence type="ECO:0000305" key="4"/>
<gene>
    <name evidence="1" type="primary">MT-ATP8</name>
    <name type="synonym">ATP8</name>
    <name type="synonym">ATPASE8</name>
    <name type="synonym">MTATP8</name>
</gene>
<sequence length="61" mass="7119">MPQLNPAPWFMILSSTWLIYTIILQPKILSHLPTNNPTNKNNKINTNSWTWPWTQHSSTNS</sequence>
<accession>Q9XPI2</accession>
<proteinExistence type="inferred from homology"/>
<comment type="function">
    <text evidence="1 2">Subunit 8, of the mitochondrial membrane ATP synthase complex (F(1)F(0) ATP synthase or Complex V) that produces ATP from ADP in the presence of a proton gradient across the membrane which is generated by electron transport complexes of the respiratory chain. ATP synthase complex consist of a soluble F(1) head domain - the catalytic core - and a membrane F(1) domain - the membrane proton channel. These two domains are linked by a central stalk rotating inside the F(1) region and a stationary peripheral stalk. During catalysis, ATP synthesis in the catalytic domain of F(1) is coupled via a rotary mechanism of the central stalk subunits to proton translocation (By similarity). In vivo, can only synthesize ATP although its ATP hydrolase activity can be activated artificially in vitro (By similarity). Part of the complex F(0) domain (By similarity).</text>
</comment>
<comment type="subunit">
    <text evidence="1">Component of the ATP synthase complex composed at least of ATP5F1A/subunit alpha, ATP5F1B/subunit beta, ATP5MC1/subunit c (homooctomer), MT-ATP6/subunit a, MT-ATP8/subunit 8, ATP5ME/subunit e, ATP5MF/subunit f, ATP5MG/subunit g, ATP5MK/subunit k, ATP5MJ/subunit j, ATP5F1C/subunit gamma, ATP5F1D/subunit delta, ATP5F1E/subunit epsilon, ATP5PF/subunit F6, ATP5PB/subunit b, ATP5PD/subunit d, ATP5PO/subunit OSCP. ATP synthase complex consists of a soluble F(1) head domain (subunits alpha(3) and beta(3)) - the catalytic core - and a membrane F(0) domain - the membrane proton channel (subunits c, a, 8, e, f, g, k and j). These two domains are linked by a central stalk (subunits gamma, delta, and epsilon) rotating inside the F1 region and a stationary peripheral stalk (subunits F6, b, d, and OSCP).</text>
</comment>
<comment type="subcellular location">
    <subcellularLocation>
        <location>Mitochondrion membrane</location>
        <topology>Single-pass membrane protein</topology>
    </subcellularLocation>
</comment>
<comment type="similarity">
    <text evidence="4">Belongs to the ATPase protein 8 family.</text>
</comment>
<keyword id="KW-0066">ATP synthesis</keyword>
<keyword id="KW-0138">CF(0)</keyword>
<keyword id="KW-0375">Hydrogen ion transport</keyword>
<keyword id="KW-0406">Ion transport</keyword>
<keyword id="KW-0472">Membrane</keyword>
<keyword id="KW-0496">Mitochondrion</keyword>
<keyword id="KW-0812">Transmembrane</keyword>
<keyword id="KW-1133">Transmembrane helix</keyword>
<keyword id="KW-0813">Transport</keyword>
<protein>
    <recommendedName>
        <fullName evidence="1">ATP synthase F(0) complex subunit 8</fullName>
    </recommendedName>
    <alternativeName>
        <fullName>A6L</fullName>
    </alternativeName>
    <alternativeName>
        <fullName>F-ATPase subunit 8</fullName>
    </alternativeName>
</protein>
<name>ATP8_CHEMY</name>
<feature type="chain" id="PRO_0000195508" description="ATP synthase F(0) complex subunit 8">
    <location>
        <begin position="1"/>
        <end position="61"/>
    </location>
</feature>
<feature type="transmembrane region" description="Helical" evidence="3">
    <location>
        <begin position="10"/>
        <end position="32"/>
    </location>
</feature>